<organism>
    <name type="scientific">Schizosaccharomyces pombe (strain 972 / ATCC 24843)</name>
    <name type="common">Fission yeast</name>
    <dbReference type="NCBI Taxonomy" id="284812"/>
    <lineage>
        <taxon>Eukaryota</taxon>
        <taxon>Fungi</taxon>
        <taxon>Dikarya</taxon>
        <taxon>Ascomycota</taxon>
        <taxon>Taphrinomycotina</taxon>
        <taxon>Schizosaccharomycetes</taxon>
        <taxon>Schizosaccharomycetales</taxon>
        <taxon>Schizosaccharomycetaceae</taxon>
        <taxon>Schizosaccharomyces</taxon>
    </lineage>
</organism>
<gene>
    <name type="primary">nrm1</name>
    <name type="ORF">SPBC16A3.07c</name>
</gene>
<keyword id="KW-0963">Cytoplasm</keyword>
<keyword id="KW-0539">Nucleus</keyword>
<keyword id="KW-1185">Reference proteome</keyword>
<keyword id="KW-0678">Repressor</keyword>
<keyword id="KW-0804">Transcription</keyword>
<keyword id="KW-0805">Transcription regulation</keyword>
<comment type="function">
    <text evidence="3">Negative regulatory component of the MBF complex involved in cell-cycle-dependent transcription.</text>
</comment>
<comment type="subunit">
    <text evidence="3">Component of the MBF transcription factor complex.</text>
</comment>
<comment type="interaction">
    <interactant intactId="EBI-15720278">
        <id>O42913</id>
    </interactant>
    <interactant intactId="EBI-3650524">
        <id>Q09170</id>
        <label>cds1</label>
    </interactant>
    <organismsDiffer>false</organismsDiffer>
    <experiments>2</experiments>
</comment>
<comment type="interaction">
    <interactant intactId="EBI-15720278">
        <id>O42913</id>
    </interactant>
    <interactant intactId="EBI-1149177">
        <id>P41412</id>
        <label>res2</label>
    </interactant>
    <organismsDiffer>false</organismsDiffer>
    <experiments>2</experiments>
</comment>
<comment type="subcellular location">
    <subcellularLocation>
        <location evidence="2">Cytoplasm</location>
    </subcellularLocation>
    <subcellularLocation>
        <location evidence="2">Nucleus</location>
    </subcellularLocation>
</comment>
<comment type="similarity">
    <text evidence="4">Belongs to the WHI5/NRM1 family.</text>
</comment>
<feature type="chain" id="PRO_0000352812" description="Transcription factor nrm1">
    <location>
        <begin position="1"/>
        <end position="342"/>
    </location>
</feature>
<feature type="region of interest" description="Disordered" evidence="1">
    <location>
        <begin position="1"/>
        <end position="22"/>
    </location>
</feature>
<feature type="region of interest" description="Disordered" evidence="1">
    <location>
        <begin position="83"/>
        <end position="126"/>
    </location>
</feature>
<feature type="region of interest" description="Disordered" evidence="1">
    <location>
        <begin position="183"/>
        <end position="228"/>
    </location>
</feature>
<feature type="region of interest" description="Disordered" evidence="1">
    <location>
        <begin position="266"/>
        <end position="330"/>
    </location>
</feature>
<feature type="compositionally biased region" description="Basic and acidic residues" evidence="1">
    <location>
        <begin position="97"/>
        <end position="114"/>
    </location>
</feature>
<feature type="compositionally biased region" description="Polar residues" evidence="1">
    <location>
        <begin position="205"/>
        <end position="218"/>
    </location>
</feature>
<feature type="compositionally biased region" description="Basic residues" evidence="1">
    <location>
        <begin position="271"/>
        <end position="280"/>
    </location>
</feature>
<feature type="compositionally biased region" description="Polar residues" evidence="1">
    <location>
        <begin position="309"/>
        <end position="323"/>
    </location>
</feature>
<name>NRM1_SCHPO</name>
<sequence length="342" mass="38328">MDRSMEPLTPSRLNTLGERPTNEVYEYGKGKNVQHLFPITPMQRPLGKENAAPGTISPIAVRSRNVRAVEIADENACEEPVLKIKSVSSTESEEEKESSTEIGEKQEKETHLEPKTPVQTNTNNNHLDDIQCCAKNLRLRLELAMYKVQVNQTFSPLQDLPIVAKTKLHNCPNSEPVTSIWNQRSLSSGKPPSLHLSGNRRLSMGSPTKSIYDQNGLTTPRPIGSDDLTHMYDPYTSPLRTPSRTLSRSSSHYLWVRHGKLTRSVSLLQHKTPRRIRPKSLSKSNSTPLKHLSAQKPNSNYYTGPPTPVSISNTPENIHPSSSEVRRIASHSKQFSDYGLIR</sequence>
<evidence type="ECO:0000256" key="1">
    <source>
        <dbReference type="SAM" id="MobiDB-lite"/>
    </source>
</evidence>
<evidence type="ECO:0000269" key="2">
    <source>
    </source>
</evidence>
<evidence type="ECO:0000269" key="3">
    <source>
    </source>
</evidence>
<evidence type="ECO:0000305" key="4"/>
<dbReference type="EMBL" id="CU329671">
    <property type="protein sequence ID" value="CAA16858.1"/>
    <property type="molecule type" value="Genomic_DNA"/>
</dbReference>
<dbReference type="PIR" id="T39545">
    <property type="entry name" value="T39545"/>
</dbReference>
<dbReference type="RefSeq" id="NP_596782.1">
    <property type="nucleotide sequence ID" value="NM_001023803.2"/>
</dbReference>
<dbReference type="BioGRID" id="276289">
    <property type="interactions" value="169"/>
</dbReference>
<dbReference type="DIP" id="DIP-46173N"/>
<dbReference type="FunCoup" id="O42913">
    <property type="interactions" value="3"/>
</dbReference>
<dbReference type="IntAct" id="O42913">
    <property type="interactions" value="3"/>
</dbReference>
<dbReference type="STRING" id="284812.O42913"/>
<dbReference type="iPTMnet" id="O42913"/>
<dbReference type="PaxDb" id="4896-SPBC16A3.07c.1"/>
<dbReference type="EnsemblFungi" id="SPBC16A3.07c.1">
    <property type="protein sequence ID" value="SPBC16A3.07c.1:pep"/>
    <property type="gene ID" value="SPBC16A3.07c"/>
</dbReference>
<dbReference type="GeneID" id="2539737"/>
<dbReference type="KEGG" id="spo:2539737"/>
<dbReference type="PomBase" id="SPBC16A3.07c">
    <property type="gene designation" value="nrm1"/>
</dbReference>
<dbReference type="VEuPathDB" id="FungiDB:SPBC16A3.07c"/>
<dbReference type="HOGENOM" id="CLU_811717_0_0_1"/>
<dbReference type="InParanoid" id="O42913"/>
<dbReference type="OMA" id="CEDSFCT"/>
<dbReference type="PRO" id="PR:O42913"/>
<dbReference type="Proteomes" id="UP000002485">
    <property type="component" value="Chromosome II"/>
</dbReference>
<dbReference type="GO" id="GO:0000785">
    <property type="term" value="C:chromatin"/>
    <property type="evidence" value="ECO:0000314"/>
    <property type="project" value="PomBase"/>
</dbReference>
<dbReference type="GO" id="GO:0005829">
    <property type="term" value="C:cytosol"/>
    <property type="evidence" value="ECO:0007005"/>
    <property type="project" value="PomBase"/>
</dbReference>
<dbReference type="GO" id="GO:0030907">
    <property type="term" value="C:MBF transcription complex"/>
    <property type="evidence" value="ECO:0000269"/>
    <property type="project" value="PomBase"/>
</dbReference>
<dbReference type="GO" id="GO:0005634">
    <property type="term" value="C:nucleus"/>
    <property type="evidence" value="ECO:0007005"/>
    <property type="project" value="PomBase"/>
</dbReference>
<dbReference type="GO" id="GO:0000978">
    <property type="term" value="F:RNA polymerase II cis-regulatory region sequence-specific DNA binding"/>
    <property type="evidence" value="ECO:0000314"/>
    <property type="project" value="PomBase"/>
</dbReference>
<dbReference type="GO" id="GO:0003714">
    <property type="term" value="F:transcription corepressor activity"/>
    <property type="evidence" value="ECO:0000269"/>
    <property type="project" value="PomBase"/>
</dbReference>
<dbReference type="GO" id="GO:0000122">
    <property type="term" value="P:negative regulation of transcription by RNA polymerase II"/>
    <property type="evidence" value="ECO:0000315"/>
    <property type="project" value="PomBase"/>
</dbReference>
<dbReference type="GO" id="GO:0006357">
    <property type="term" value="P:regulation of transcription by RNA polymerase II"/>
    <property type="evidence" value="ECO:0000315"/>
    <property type="project" value="PomBase"/>
</dbReference>
<dbReference type="InterPro" id="IPR013734">
    <property type="entry name" value="TF_Nrm1/Whi5"/>
</dbReference>
<dbReference type="Pfam" id="PF08528">
    <property type="entry name" value="Whi5"/>
    <property type="match status" value="1"/>
</dbReference>
<reference key="1">
    <citation type="journal article" date="2002" name="Nature">
        <title>The genome sequence of Schizosaccharomyces pombe.</title>
        <authorList>
            <person name="Wood V."/>
            <person name="Gwilliam R."/>
            <person name="Rajandream M.A."/>
            <person name="Lyne M.H."/>
            <person name="Lyne R."/>
            <person name="Stewart A."/>
            <person name="Sgouros J.G."/>
            <person name="Peat N."/>
            <person name="Hayles J."/>
            <person name="Baker S.G."/>
            <person name="Basham D."/>
            <person name="Bowman S."/>
            <person name="Brooks K."/>
            <person name="Brown D."/>
            <person name="Brown S."/>
            <person name="Chillingworth T."/>
            <person name="Churcher C.M."/>
            <person name="Collins M."/>
            <person name="Connor R."/>
            <person name="Cronin A."/>
            <person name="Davis P."/>
            <person name="Feltwell T."/>
            <person name="Fraser A."/>
            <person name="Gentles S."/>
            <person name="Goble A."/>
            <person name="Hamlin N."/>
            <person name="Harris D.E."/>
            <person name="Hidalgo J."/>
            <person name="Hodgson G."/>
            <person name="Holroyd S."/>
            <person name="Hornsby T."/>
            <person name="Howarth S."/>
            <person name="Huckle E.J."/>
            <person name="Hunt S."/>
            <person name="Jagels K."/>
            <person name="James K.D."/>
            <person name="Jones L."/>
            <person name="Jones M."/>
            <person name="Leather S."/>
            <person name="McDonald S."/>
            <person name="McLean J."/>
            <person name="Mooney P."/>
            <person name="Moule S."/>
            <person name="Mungall K.L."/>
            <person name="Murphy L.D."/>
            <person name="Niblett D."/>
            <person name="Odell C."/>
            <person name="Oliver K."/>
            <person name="O'Neil S."/>
            <person name="Pearson D."/>
            <person name="Quail M.A."/>
            <person name="Rabbinowitsch E."/>
            <person name="Rutherford K.M."/>
            <person name="Rutter S."/>
            <person name="Saunders D."/>
            <person name="Seeger K."/>
            <person name="Sharp S."/>
            <person name="Skelton J."/>
            <person name="Simmonds M.N."/>
            <person name="Squares R."/>
            <person name="Squares S."/>
            <person name="Stevens K."/>
            <person name="Taylor K."/>
            <person name="Taylor R.G."/>
            <person name="Tivey A."/>
            <person name="Walsh S.V."/>
            <person name="Warren T."/>
            <person name="Whitehead S."/>
            <person name="Woodward J.R."/>
            <person name="Volckaert G."/>
            <person name="Aert R."/>
            <person name="Robben J."/>
            <person name="Grymonprez B."/>
            <person name="Weltjens I."/>
            <person name="Vanstreels E."/>
            <person name="Rieger M."/>
            <person name="Schaefer M."/>
            <person name="Mueller-Auer S."/>
            <person name="Gabel C."/>
            <person name="Fuchs M."/>
            <person name="Duesterhoeft A."/>
            <person name="Fritzc C."/>
            <person name="Holzer E."/>
            <person name="Moestl D."/>
            <person name="Hilbert H."/>
            <person name="Borzym K."/>
            <person name="Langer I."/>
            <person name="Beck A."/>
            <person name="Lehrach H."/>
            <person name="Reinhardt R."/>
            <person name="Pohl T.M."/>
            <person name="Eger P."/>
            <person name="Zimmermann W."/>
            <person name="Wedler H."/>
            <person name="Wambutt R."/>
            <person name="Purnelle B."/>
            <person name="Goffeau A."/>
            <person name="Cadieu E."/>
            <person name="Dreano S."/>
            <person name="Gloux S."/>
            <person name="Lelaure V."/>
            <person name="Mottier S."/>
            <person name="Galibert F."/>
            <person name="Aves S.J."/>
            <person name="Xiang Z."/>
            <person name="Hunt C."/>
            <person name="Moore K."/>
            <person name="Hurst S.M."/>
            <person name="Lucas M."/>
            <person name="Rochet M."/>
            <person name="Gaillardin C."/>
            <person name="Tallada V.A."/>
            <person name="Garzon A."/>
            <person name="Thode G."/>
            <person name="Daga R.R."/>
            <person name="Cruzado L."/>
            <person name="Jimenez J."/>
            <person name="Sanchez M."/>
            <person name="del Rey F."/>
            <person name="Benito J."/>
            <person name="Dominguez A."/>
            <person name="Revuelta J.L."/>
            <person name="Moreno S."/>
            <person name="Armstrong J."/>
            <person name="Forsburg S.L."/>
            <person name="Cerutti L."/>
            <person name="Lowe T."/>
            <person name="McCombie W.R."/>
            <person name="Paulsen I."/>
            <person name="Potashkin J."/>
            <person name="Shpakovski G.V."/>
            <person name="Ussery D."/>
            <person name="Barrell B.G."/>
            <person name="Nurse P."/>
        </authorList>
    </citation>
    <scope>NUCLEOTIDE SEQUENCE [LARGE SCALE GENOMIC DNA]</scope>
    <source>
        <strain>972 / ATCC 24843</strain>
    </source>
</reference>
<reference key="2">
    <citation type="journal article" date="2006" name="Mol. Cell">
        <title>Constraining G1-specific transcription to late G1 phase: the MBF-associated corepressor Nrm1 acts via negative feedback.</title>
        <authorList>
            <person name="de Bruin R.A.M."/>
            <person name="Kalashnikova T.I."/>
            <person name="Chahwan C."/>
            <person name="McDonald W.H."/>
            <person name="Wohlschlegel J."/>
            <person name="Yates J. III"/>
            <person name="Russell P."/>
            <person name="Wittenberg C."/>
        </authorList>
    </citation>
    <scope>IDENTIFICATION IN THE MBF COMPLEX</scope>
    <scope>FUNCTION</scope>
</reference>
<reference key="3">
    <citation type="journal article" date="2006" name="Nat. Biotechnol.">
        <title>ORFeome cloning and global analysis of protein localization in the fission yeast Schizosaccharomyces pombe.</title>
        <authorList>
            <person name="Matsuyama A."/>
            <person name="Arai R."/>
            <person name="Yashiroda Y."/>
            <person name="Shirai A."/>
            <person name="Kamata A."/>
            <person name="Sekido S."/>
            <person name="Kobayashi Y."/>
            <person name="Hashimoto A."/>
            <person name="Hamamoto M."/>
            <person name="Hiraoka Y."/>
            <person name="Horinouchi S."/>
            <person name="Yoshida M."/>
        </authorList>
    </citation>
    <scope>SUBCELLULAR LOCATION [LARGE SCALE ANALYSIS]</scope>
</reference>
<protein>
    <recommendedName>
        <fullName>Transcription factor nrm1</fullName>
    </recommendedName>
    <alternativeName>
        <fullName>Negative regulator of MBF targets 1</fullName>
    </alternativeName>
</protein>
<proteinExistence type="evidence at protein level"/>
<accession>O42913</accession>